<protein>
    <recommendedName>
        <fullName evidence="1">Demethylmenaquinone methyltransferase</fullName>
        <ecNumber evidence="1">2.1.1.163</ecNumber>
    </recommendedName>
</protein>
<name>MENG_STAAW</name>
<feature type="chain" id="PRO_0000193332" description="Demethylmenaquinone methyltransferase">
    <location>
        <begin position="1"/>
        <end position="241"/>
    </location>
</feature>
<feature type="binding site" evidence="1">
    <location>
        <position position="60"/>
    </location>
    <ligand>
        <name>S-adenosyl-L-methionine</name>
        <dbReference type="ChEBI" id="CHEBI:59789"/>
    </ligand>
</feature>
<feature type="binding site" evidence="1">
    <location>
        <position position="81"/>
    </location>
    <ligand>
        <name>S-adenosyl-L-methionine</name>
        <dbReference type="ChEBI" id="CHEBI:59789"/>
    </ligand>
</feature>
<feature type="binding site" evidence="1">
    <location>
        <begin position="106"/>
        <end position="107"/>
    </location>
    <ligand>
        <name>S-adenosyl-L-methionine</name>
        <dbReference type="ChEBI" id="CHEBI:59789"/>
    </ligand>
</feature>
<comment type="function">
    <text evidence="1">Methyltransferase required for the conversion of demethylmenaquinol (DMKH2) to menaquinol (MKH2).</text>
</comment>
<comment type="catalytic activity">
    <reaction evidence="1">
        <text>a 2-demethylmenaquinol + S-adenosyl-L-methionine = a menaquinol + S-adenosyl-L-homocysteine + H(+)</text>
        <dbReference type="Rhea" id="RHEA:42640"/>
        <dbReference type="Rhea" id="RHEA-COMP:9539"/>
        <dbReference type="Rhea" id="RHEA-COMP:9563"/>
        <dbReference type="ChEBI" id="CHEBI:15378"/>
        <dbReference type="ChEBI" id="CHEBI:18151"/>
        <dbReference type="ChEBI" id="CHEBI:55437"/>
        <dbReference type="ChEBI" id="CHEBI:57856"/>
        <dbReference type="ChEBI" id="CHEBI:59789"/>
        <dbReference type="EC" id="2.1.1.163"/>
    </reaction>
</comment>
<comment type="pathway">
    <text evidence="1">Quinol/quinone metabolism; menaquinone biosynthesis; menaquinol from 1,4-dihydroxy-2-naphthoate: step 2/2.</text>
</comment>
<comment type="similarity">
    <text evidence="1">Belongs to the class I-like SAM-binding methyltransferase superfamily. MenG/UbiE family.</text>
</comment>
<reference key="1">
    <citation type="journal article" date="2002" name="Lancet">
        <title>Genome and virulence determinants of high virulence community-acquired MRSA.</title>
        <authorList>
            <person name="Baba T."/>
            <person name="Takeuchi F."/>
            <person name="Kuroda M."/>
            <person name="Yuzawa H."/>
            <person name="Aoki K."/>
            <person name="Oguchi A."/>
            <person name="Nagai Y."/>
            <person name="Iwama N."/>
            <person name="Asano K."/>
            <person name="Naimi T."/>
            <person name="Kuroda H."/>
            <person name="Cui L."/>
            <person name="Yamamoto K."/>
            <person name="Hiramatsu K."/>
        </authorList>
    </citation>
    <scope>NUCLEOTIDE SEQUENCE [LARGE SCALE GENOMIC DNA]</scope>
    <source>
        <strain>MW2</strain>
    </source>
</reference>
<dbReference type="EC" id="2.1.1.163" evidence="1"/>
<dbReference type="EMBL" id="BA000033">
    <property type="protein sequence ID" value="BAB95225.1"/>
    <property type="molecule type" value="Genomic_DNA"/>
</dbReference>
<dbReference type="RefSeq" id="WP_000774684.1">
    <property type="nucleotide sequence ID" value="NC_003923.1"/>
</dbReference>
<dbReference type="SMR" id="P67063"/>
<dbReference type="KEGG" id="sam:MW1360"/>
<dbReference type="HOGENOM" id="CLU_037990_0_0_9"/>
<dbReference type="UniPathway" id="UPA00079">
    <property type="reaction ID" value="UER00169"/>
</dbReference>
<dbReference type="GO" id="GO:0043770">
    <property type="term" value="F:demethylmenaquinone methyltransferase activity"/>
    <property type="evidence" value="ECO:0007669"/>
    <property type="project" value="UniProtKB-UniRule"/>
</dbReference>
<dbReference type="GO" id="GO:0009234">
    <property type="term" value="P:menaquinone biosynthetic process"/>
    <property type="evidence" value="ECO:0007669"/>
    <property type="project" value="UniProtKB-UniRule"/>
</dbReference>
<dbReference type="GO" id="GO:0032259">
    <property type="term" value="P:methylation"/>
    <property type="evidence" value="ECO:0007669"/>
    <property type="project" value="UniProtKB-KW"/>
</dbReference>
<dbReference type="CDD" id="cd02440">
    <property type="entry name" value="AdoMet_MTases"/>
    <property type="match status" value="1"/>
</dbReference>
<dbReference type="FunFam" id="3.40.50.150:FF:000086">
    <property type="entry name" value="Demethylmenaquinone methyltransferase"/>
    <property type="match status" value="1"/>
</dbReference>
<dbReference type="Gene3D" id="3.40.50.150">
    <property type="entry name" value="Vaccinia Virus protein VP39"/>
    <property type="match status" value="1"/>
</dbReference>
<dbReference type="HAMAP" id="MF_01813">
    <property type="entry name" value="MenG_UbiE_methyltr"/>
    <property type="match status" value="1"/>
</dbReference>
<dbReference type="InterPro" id="IPR029063">
    <property type="entry name" value="SAM-dependent_MTases_sf"/>
</dbReference>
<dbReference type="InterPro" id="IPR004033">
    <property type="entry name" value="UbiE/COQ5_MeTrFase"/>
</dbReference>
<dbReference type="InterPro" id="IPR023576">
    <property type="entry name" value="UbiE/COQ5_MeTrFase_CS"/>
</dbReference>
<dbReference type="NCBIfam" id="TIGR01934">
    <property type="entry name" value="MenG_MenH_UbiE"/>
    <property type="match status" value="1"/>
</dbReference>
<dbReference type="NCBIfam" id="NF001243">
    <property type="entry name" value="PRK00216.1-4"/>
    <property type="match status" value="1"/>
</dbReference>
<dbReference type="NCBIfam" id="NF001244">
    <property type="entry name" value="PRK00216.1-5"/>
    <property type="match status" value="1"/>
</dbReference>
<dbReference type="PANTHER" id="PTHR43591:SF24">
    <property type="entry name" value="2-METHOXY-6-POLYPRENYL-1,4-BENZOQUINOL METHYLASE, MITOCHONDRIAL"/>
    <property type="match status" value="1"/>
</dbReference>
<dbReference type="PANTHER" id="PTHR43591">
    <property type="entry name" value="METHYLTRANSFERASE"/>
    <property type="match status" value="1"/>
</dbReference>
<dbReference type="Pfam" id="PF01209">
    <property type="entry name" value="Ubie_methyltran"/>
    <property type="match status" value="1"/>
</dbReference>
<dbReference type="SUPFAM" id="SSF53335">
    <property type="entry name" value="S-adenosyl-L-methionine-dependent methyltransferases"/>
    <property type="match status" value="1"/>
</dbReference>
<dbReference type="PROSITE" id="PS51608">
    <property type="entry name" value="SAM_MT_UBIE"/>
    <property type="match status" value="1"/>
</dbReference>
<dbReference type="PROSITE" id="PS01183">
    <property type="entry name" value="UBIE_1"/>
    <property type="match status" value="1"/>
</dbReference>
<dbReference type="PROSITE" id="PS01184">
    <property type="entry name" value="UBIE_2"/>
    <property type="match status" value="1"/>
</dbReference>
<sequence length="241" mass="27423">MADNKANKEQVHRVFQNISKKYDRLNNIISFEQHKVWRKRVMKDMGVRKGTKALDVCCGTGDWTIALSKAVGPTGEVTGIDFSENMLEVGKEKTASMENVKLVHGDAMELPFEDNSFDYVTIGFGLRNVPDYLVALKEMNRVLKPGGMVVCLETSQPTLPVFKQMYALYFKFVMPIFGKLFAKSKEEYEWLQQSTFNFPGKEELKRMFEEAGFINVRVRSFTGGVAAMHLGYKEKDNTKGD</sequence>
<proteinExistence type="inferred from homology"/>
<accession>P67063</accession>
<accession>Q99U19</accession>
<evidence type="ECO:0000255" key="1">
    <source>
        <dbReference type="HAMAP-Rule" id="MF_01813"/>
    </source>
</evidence>
<keyword id="KW-0474">Menaquinone biosynthesis</keyword>
<keyword id="KW-0489">Methyltransferase</keyword>
<keyword id="KW-0949">S-adenosyl-L-methionine</keyword>
<keyword id="KW-0808">Transferase</keyword>
<gene>
    <name evidence="1" type="primary">menG</name>
    <name type="ordered locus">MW1360</name>
</gene>
<organism>
    <name type="scientific">Staphylococcus aureus (strain MW2)</name>
    <dbReference type="NCBI Taxonomy" id="196620"/>
    <lineage>
        <taxon>Bacteria</taxon>
        <taxon>Bacillati</taxon>
        <taxon>Bacillota</taxon>
        <taxon>Bacilli</taxon>
        <taxon>Bacillales</taxon>
        <taxon>Staphylococcaceae</taxon>
        <taxon>Staphylococcus</taxon>
    </lineage>
</organism>